<dbReference type="EC" id="2.3.1.275" evidence="1"/>
<dbReference type="EMBL" id="BX569690">
    <property type="protein sequence ID" value="CAE07092.1"/>
    <property type="molecule type" value="Genomic_DNA"/>
</dbReference>
<dbReference type="SMR" id="Q7U8N7"/>
<dbReference type="STRING" id="84588.SYNW0577"/>
<dbReference type="KEGG" id="syw:SYNW0577"/>
<dbReference type="eggNOG" id="COG0344">
    <property type="taxonomic scope" value="Bacteria"/>
</dbReference>
<dbReference type="HOGENOM" id="CLU_081254_7_1_3"/>
<dbReference type="UniPathway" id="UPA00085"/>
<dbReference type="Proteomes" id="UP000001422">
    <property type="component" value="Chromosome"/>
</dbReference>
<dbReference type="GO" id="GO:0005886">
    <property type="term" value="C:plasma membrane"/>
    <property type="evidence" value="ECO:0007669"/>
    <property type="project" value="UniProtKB-SubCell"/>
</dbReference>
<dbReference type="GO" id="GO:0043772">
    <property type="term" value="F:acyl-phosphate glycerol-3-phosphate acyltransferase activity"/>
    <property type="evidence" value="ECO:0007669"/>
    <property type="project" value="UniProtKB-UniRule"/>
</dbReference>
<dbReference type="GO" id="GO:0008654">
    <property type="term" value="P:phospholipid biosynthetic process"/>
    <property type="evidence" value="ECO:0007669"/>
    <property type="project" value="UniProtKB-UniRule"/>
</dbReference>
<dbReference type="HAMAP" id="MF_01043">
    <property type="entry name" value="PlsY"/>
    <property type="match status" value="1"/>
</dbReference>
<dbReference type="InterPro" id="IPR003811">
    <property type="entry name" value="G3P_acylTferase_PlsY"/>
</dbReference>
<dbReference type="NCBIfam" id="TIGR00023">
    <property type="entry name" value="glycerol-3-phosphate 1-O-acyltransferase PlsY"/>
    <property type="match status" value="1"/>
</dbReference>
<dbReference type="PANTHER" id="PTHR30309:SF0">
    <property type="entry name" value="GLYCEROL-3-PHOSPHATE ACYLTRANSFERASE-RELATED"/>
    <property type="match status" value="1"/>
</dbReference>
<dbReference type="PANTHER" id="PTHR30309">
    <property type="entry name" value="INNER MEMBRANE PROTEIN YGIH"/>
    <property type="match status" value="1"/>
</dbReference>
<dbReference type="Pfam" id="PF02660">
    <property type="entry name" value="G3P_acyltransf"/>
    <property type="match status" value="1"/>
</dbReference>
<dbReference type="SMART" id="SM01207">
    <property type="entry name" value="G3P_acyltransf"/>
    <property type="match status" value="1"/>
</dbReference>
<sequence length="212" mass="22022">MLPFLRDPAACLVPVILTALLLLAIGYLLGSTPSGYLAGRWLKGIDLRDCGSGSTGATNVLRNVGKGPALVVFLIDVGKGALAVLLAKTFGLSDWLQVLAGLAALAGHIWPVWLGWKGGKAVATGFGMFLGLAWPVGLACFGLFMAVISIFRIVSLSSVVAAIGLPLLMVVSGGSSAYVVVSLVASLMVLWRHRSNIERLIAGTEPKIGQKA</sequence>
<reference key="1">
    <citation type="journal article" date="2003" name="Nature">
        <title>The genome of a motile marine Synechococcus.</title>
        <authorList>
            <person name="Palenik B."/>
            <person name="Brahamsha B."/>
            <person name="Larimer F.W."/>
            <person name="Land M.L."/>
            <person name="Hauser L."/>
            <person name="Chain P."/>
            <person name="Lamerdin J.E."/>
            <person name="Regala W."/>
            <person name="Allen E.E."/>
            <person name="McCarren J."/>
            <person name="Paulsen I.T."/>
            <person name="Dufresne A."/>
            <person name="Partensky F."/>
            <person name="Webb E.A."/>
            <person name="Waterbury J."/>
        </authorList>
    </citation>
    <scope>NUCLEOTIDE SEQUENCE [LARGE SCALE GENOMIC DNA]</scope>
    <source>
        <strain>WH8102</strain>
    </source>
</reference>
<organism>
    <name type="scientific">Parasynechococcus marenigrum (strain WH8102)</name>
    <dbReference type="NCBI Taxonomy" id="84588"/>
    <lineage>
        <taxon>Bacteria</taxon>
        <taxon>Bacillati</taxon>
        <taxon>Cyanobacteriota</taxon>
        <taxon>Cyanophyceae</taxon>
        <taxon>Synechococcales</taxon>
        <taxon>Prochlorococcaceae</taxon>
        <taxon>Parasynechococcus</taxon>
        <taxon>Parasynechococcus marenigrum</taxon>
    </lineage>
</organism>
<proteinExistence type="inferred from homology"/>
<feature type="chain" id="PRO_0000188476" description="Glycerol-3-phosphate acyltransferase">
    <location>
        <begin position="1"/>
        <end position="212"/>
    </location>
</feature>
<feature type="transmembrane region" description="Helical" evidence="1">
    <location>
        <begin position="9"/>
        <end position="29"/>
    </location>
</feature>
<feature type="transmembrane region" description="Helical" evidence="1">
    <location>
        <begin position="67"/>
        <end position="87"/>
    </location>
</feature>
<feature type="transmembrane region" description="Helical" evidence="1">
    <location>
        <begin position="95"/>
        <end position="115"/>
    </location>
</feature>
<feature type="transmembrane region" description="Helical" evidence="1">
    <location>
        <begin position="128"/>
        <end position="148"/>
    </location>
</feature>
<feature type="transmembrane region" description="Helical" evidence="1">
    <location>
        <begin position="168"/>
        <end position="190"/>
    </location>
</feature>
<name>PLSY_PARMW</name>
<accession>Q7U8N7</accession>
<comment type="function">
    <text evidence="1">Catalyzes the transfer of an acyl group from acyl-phosphate (acyl-PO(4)) to glycerol-3-phosphate (G3P) to form lysophosphatidic acid (LPA). This enzyme utilizes acyl-phosphate as fatty acyl donor, but not acyl-CoA or acyl-ACP.</text>
</comment>
<comment type="catalytic activity">
    <reaction evidence="1">
        <text>an acyl phosphate + sn-glycerol 3-phosphate = a 1-acyl-sn-glycero-3-phosphate + phosphate</text>
        <dbReference type="Rhea" id="RHEA:34075"/>
        <dbReference type="ChEBI" id="CHEBI:43474"/>
        <dbReference type="ChEBI" id="CHEBI:57597"/>
        <dbReference type="ChEBI" id="CHEBI:57970"/>
        <dbReference type="ChEBI" id="CHEBI:59918"/>
        <dbReference type="EC" id="2.3.1.275"/>
    </reaction>
</comment>
<comment type="pathway">
    <text evidence="1">Lipid metabolism; phospholipid metabolism.</text>
</comment>
<comment type="subunit">
    <text evidence="1">Probably interacts with PlsX.</text>
</comment>
<comment type="subcellular location">
    <subcellularLocation>
        <location evidence="1">Cell inner membrane</location>
        <topology evidence="1">Multi-pass membrane protein</topology>
    </subcellularLocation>
</comment>
<comment type="similarity">
    <text evidence="1">Belongs to the PlsY family.</text>
</comment>
<keyword id="KW-0997">Cell inner membrane</keyword>
<keyword id="KW-1003">Cell membrane</keyword>
<keyword id="KW-0444">Lipid biosynthesis</keyword>
<keyword id="KW-0443">Lipid metabolism</keyword>
<keyword id="KW-0472">Membrane</keyword>
<keyword id="KW-0594">Phospholipid biosynthesis</keyword>
<keyword id="KW-1208">Phospholipid metabolism</keyword>
<keyword id="KW-0808">Transferase</keyword>
<keyword id="KW-0812">Transmembrane</keyword>
<keyword id="KW-1133">Transmembrane helix</keyword>
<protein>
    <recommendedName>
        <fullName evidence="1">Glycerol-3-phosphate acyltransferase</fullName>
    </recommendedName>
    <alternativeName>
        <fullName evidence="1">Acyl-PO4 G3P acyltransferase</fullName>
    </alternativeName>
    <alternativeName>
        <fullName evidence="1">Acyl-phosphate--glycerol-3-phosphate acyltransferase</fullName>
    </alternativeName>
    <alternativeName>
        <fullName evidence="1">G3P acyltransferase</fullName>
        <shortName evidence="1">GPAT</shortName>
        <ecNumber evidence="1">2.3.1.275</ecNumber>
    </alternativeName>
    <alternativeName>
        <fullName evidence="1">Lysophosphatidic acid synthase</fullName>
        <shortName evidence="1">LPA synthase</shortName>
    </alternativeName>
</protein>
<evidence type="ECO:0000255" key="1">
    <source>
        <dbReference type="HAMAP-Rule" id="MF_01043"/>
    </source>
</evidence>
<gene>
    <name evidence="1" type="primary">plsY</name>
    <name type="ordered locus">SYNW0577</name>
</gene>